<name>ISPE_CUPTR</name>
<organism>
    <name type="scientific">Cupriavidus taiwanensis (strain DSM 17343 / BCRC 17206 / CCUG 44338 / CIP 107171 / LMG 19424 / R1)</name>
    <name type="common">Ralstonia taiwanensis (strain LMG 19424)</name>
    <dbReference type="NCBI Taxonomy" id="977880"/>
    <lineage>
        <taxon>Bacteria</taxon>
        <taxon>Pseudomonadati</taxon>
        <taxon>Pseudomonadota</taxon>
        <taxon>Betaproteobacteria</taxon>
        <taxon>Burkholderiales</taxon>
        <taxon>Burkholderiaceae</taxon>
        <taxon>Cupriavidus</taxon>
    </lineage>
</organism>
<gene>
    <name evidence="1" type="primary">ispE</name>
    <name type="ordered locus">RALTA_A0318</name>
</gene>
<dbReference type="EC" id="2.7.1.148" evidence="1"/>
<dbReference type="EMBL" id="CU633749">
    <property type="protein sequence ID" value="CAP62988.1"/>
    <property type="molecule type" value="Genomic_DNA"/>
</dbReference>
<dbReference type="RefSeq" id="WP_012351655.1">
    <property type="nucleotide sequence ID" value="NC_010528.1"/>
</dbReference>
<dbReference type="SMR" id="B2AGT9"/>
<dbReference type="GeneID" id="29762935"/>
<dbReference type="KEGG" id="cti:RALTA_A0318"/>
<dbReference type="eggNOG" id="COG1947">
    <property type="taxonomic scope" value="Bacteria"/>
</dbReference>
<dbReference type="HOGENOM" id="CLU_053057_3_0_4"/>
<dbReference type="BioCyc" id="CTAI977880:RALTA_RS01555-MONOMER"/>
<dbReference type="UniPathway" id="UPA00056">
    <property type="reaction ID" value="UER00094"/>
</dbReference>
<dbReference type="Proteomes" id="UP000001692">
    <property type="component" value="Chromosome 1"/>
</dbReference>
<dbReference type="GO" id="GO:0050515">
    <property type="term" value="F:4-(cytidine 5'-diphospho)-2-C-methyl-D-erythritol kinase activity"/>
    <property type="evidence" value="ECO:0007669"/>
    <property type="project" value="UniProtKB-UniRule"/>
</dbReference>
<dbReference type="GO" id="GO:0005524">
    <property type="term" value="F:ATP binding"/>
    <property type="evidence" value="ECO:0007669"/>
    <property type="project" value="UniProtKB-UniRule"/>
</dbReference>
<dbReference type="GO" id="GO:0019288">
    <property type="term" value="P:isopentenyl diphosphate biosynthetic process, methylerythritol 4-phosphate pathway"/>
    <property type="evidence" value="ECO:0007669"/>
    <property type="project" value="UniProtKB-UniRule"/>
</dbReference>
<dbReference type="GO" id="GO:0016114">
    <property type="term" value="P:terpenoid biosynthetic process"/>
    <property type="evidence" value="ECO:0007669"/>
    <property type="project" value="InterPro"/>
</dbReference>
<dbReference type="Gene3D" id="3.30.230.10">
    <property type="match status" value="1"/>
</dbReference>
<dbReference type="Gene3D" id="3.30.70.890">
    <property type="entry name" value="GHMP kinase, C-terminal domain"/>
    <property type="match status" value="1"/>
</dbReference>
<dbReference type="HAMAP" id="MF_00061">
    <property type="entry name" value="IspE"/>
    <property type="match status" value="1"/>
</dbReference>
<dbReference type="InterPro" id="IPR013750">
    <property type="entry name" value="GHMP_kinase_C_dom"/>
</dbReference>
<dbReference type="InterPro" id="IPR036554">
    <property type="entry name" value="GHMP_kinase_C_sf"/>
</dbReference>
<dbReference type="InterPro" id="IPR006204">
    <property type="entry name" value="GHMP_kinase_N_dom"/>
</dbReference>
<dbReference type="InterPro" id="IPR004424">
    <property type="entry name" value="IspE"/>
</dbReference>
<dbReference type="InterPro" id="IPR020568">
    <property type="entry name" value="Ribosomal_Su5_D2-typ_SF"/>
</dbReference>
<dbReference type="InterPro" id="IPR014721">
    <property type="entry name" value="Ribsml_uS5_D2-typ_fold_subgr"/>
</dbReference>
<dbReference type="NCBIfam" id="TIGR00154">
    <property type="entry name" value="ispE"/>
    <property type="match status" value="1"/>
</dbReference>
<dbReference type="NCBIfam" id="NF011202">
    <property type="entry name" value="PRK14608.1"/>
    <property type="match status" value="1"/>
</dbReference>
<dbReference type="PANTHER" id="PTHR43527">
    <property type="entry name" value="4-DIPHOSPHOCYTIDYL-2-C-METHYL-D-ERYTHRITOL KINASE, CHLOROPLASTIC"/>
    <property type="match status" value="1"/>
</dbReference>
<dbReference type="PANTHER" id="PTHR43527:SF2">
    <property type="entry name" value="4-DIPHOSPHOCYTIDYL-2-C-METHYL-D-ERYTHRITOL KINASE, CHLOROPLASTIC"/>
    <property type="match status" value="1"/>
</dbReference>
<dbReference type="Pfam" id="PF08544">
    <property type="entry name" value="GHMP_kinases_C"/>
    <property type="match status" value="1"/>
</dbReference>
<dbReference type="Pfam" id="PF00288">
    <property type="entry name" value="GHMP_kinases_N"/>
    <property type="match status" value="1"/>
</dbReference>
<dbReference type="PIRSF" id="PIRSF010376">
    <property type="entry name" value="IspE"/>
    <property type="match status" value="1"/>
</dbReference>
<dbReference type="SUPFAM" id="SSF55060">
    <property type="entry name" value="GHMP Kinase, C-terminal domain"/>
    <property type="match status" value="1"/>
</dbReference>
<dbReference type="SUPFAM" id="SSF54211">
    <property type="entry name" value="Ribosomal protein S5 domain 2-like"/>
    <property type="match status" value="1"/>
</dbReference>
<proteinExistence type="inferred from homology"/>
<feature type="chain" id="PRO_1000092081" description="4-diphosphocytidyl-2-C-methyl-D-erythritol kinase">
    <location>
        <begin position="1"/>
        <end position="292"/>
    </location>
</feature>
<feature type="active site" evidence="1">
    <location>
        <position position="20"/>
    </location>
</feature>
<feature type="active site" evidence="1">
    <location>
        <position position="145"/>
    </location>
</feature>
<feature type="binding site" evidence="1">
    <location>
        <begin position="103"/>
        <end position="113"/>
    </location>
    <ligand>
        <name>ATP</name>
        <dbReference type="ChEBI" id="CHEBI:30616"/>
    </ligand>
</feature>
<reference key="1">
    <citation type="journal article" date="2008" name="Genome Res.">
        <title>Genome sequence of the beta-rhizobium Cupriavidus taiwanensis and comparative genomics of rhizobia.</title>
        <authorList>
            <person name="Amadou C."/>
            <person name="Pascal G."/>
            <person name="Mangenot S."/>
            <person name="Glew M."/>
            <person name="Bontemps C."/>
            <person name="Capela D."/>
            <person name="Carrere S."/>
            <person name="Cruveiller S."/>
            <person name="Dossat C."/>
            <person name="Lajus A."/>
            <person name="Marchetti M."/>
            <person name="Poinsot V."/>
            <person name="Rouy Z."/>
            <person name="Servin B."/>
            <person name="Saad M."/>
            <person name="Schenowitz C."/>
            <person name="Barbe V."/>
            <person name="Batut J."/>
            <person name="Medigue C."/>
            <person name="Masson-Boivin C."/>
        </authorList>
    </citation>
    <scope>NUCLEOTIDE SEQUENCE [LARGE SCALE GENOMIC DNA]</scope>
    <source>
        <strain>DSM 17343 / BCRC 17206 / CCUG 44338 / CIP 107171 / LMG 19424 / R1</strain>
    </source>
</reference>
<evidence type="ECO:0000255" key="1">
    <source>
        <dbReference type="HAMAP-Rule" id="MF_00061"/>
    </source>
</evidence>
<protein>
    <recommendedName>
        <fullName evidence="1">4-diphosphocytidyl-2-C-methyl-D-erythritol kinase</fullName>
        <shortName evidence="1">CMK</shortName>
        <ecNumber evidence="1">2.7.1.148</ecNumber>
    </recommendedName>
    <alternativeName>
        <fullName evidence="1">4-(cytidine-5'-diphospho)-2-C-methyl-D-erythritol kinase</fullName>
    </alternativeName>
</protein>
<accession>B2AGT9</accession>
<sequence length="292" mass="31640">MPSSHPLPPPELRDCPAPAKLNLFLHVTGRRADGYHTLQTVFQLVDWCDMLHFRRRDDGVVARVTEVPGVPAESDLVVRAARALQAATGTTFGAEIAIDKVLPMGGGIGGGSSDAATTLLALNHLWGLGLTRPELMRIGLTLGADVPVFVLGQNAFAQGIGEELTPVELPDSWFVIIHPKQHVPTAEIFSDECLTRDTPVSIIAVFAARTNKFDFGRNDLEPIATAKFGEVARALAWLKQHNQHARMTGSGACVFARFPDAKTAQQVLERLPPEWDGRCVRSLAHHPLAAFA</sequence>
<keyword id="KW-0067">ATP-binding</keyword>
<keyword id="KW-0414">Isoprene biosynthesis</keyword>
<keyword id="KW-0418">Kinase</keyword>
<keyword id="KW-0547">Nucleotide-binding</keyword>
<keyword id="KW-0808">Transferase</keyword>
<comment type="function">
    <text evidence="1">Catalyzes the phosphorylation of the position 2 hydroxy group of 4-diphosphocytidyl-2C-methyl-D-erythritol.</text>
</comment>
<comment type="catalytic activity">
    <reaction evidence="1">
        <text>4-CDP-2-C-methyl-D-erythritol + ATP = 4-CDP-2-C-methyl-D-erythritol 2-phosphate + ADP + H(+)</text>
        <dbReference type="Rhea" id="RHEA:18437"/>
        <dbReference type="ChEBI" id="CHEBI:15378"/>
        <dbReference type="ChEBI" id="CHEBI:30616"/>
        <dbReference type="ChEBI" id="CHEBI:57823"/>
        <dbReference type="ChEBI" id="CHEBI:57919"/>
        <dbReference type="ChEBI" id="CHEBI:456216"/>
        <dbReference type="EC" id="2.7.1.148"/>
    </reaction>
</comment>
<comment type="pathway">
    <text evidence="1">Isoprenoid biosynthesis; isopentenyl diphosphate biosynthesis via DXP pathway; isopentenyl diphosphate from 1-deoxy-D-xylulose 5-phosphate: step 3/6.</text>
</comment>
<comment type="similarity">
    <text evidence="1">Belongs to the GHMP kinase family. IspE subfamily.</text>
</comment>